<name>Y2377_PSEPW</name>
<gene>
    <name type="ordered locus">PputW619_2377</name>
</gene>
<protein>
    <recommendedName>
        <fullName evidence="1">UPF0145 protein PputW619_2377</fullName>
    </recommendedName>
</protein>
<feature type="chain" id="PRO_1000120008" description="UPF0145 protein PputW619_2377">
    <location>
        <begin position="1"/>
        <end position="106"/>
    </location>
</feature>
<proteinExistence type="inferred from homology"/>
<reference key="1">
    <citation type="submission" date="2008-02" db="EMBL/GenBank/DDBJ databases">
        <title>Complete sequence of Pseudomonas putida W619.</title>
        <authorList>
            <person name="Copeland A."/>
            <person name="Lucas S."/>
            <person name="Lapidus A."/>
            <person name="Barry K."/>
            <person name="Detter J.C."/>
            <person name="Glavina del Rio T."/>
            <person name="Dalin E."/>
            <person name="Tice H."/>
            <person name="Pitluck S."/>
            <person name="Chain P."/>
            <person name="Malfatti S."/>
            <person name="Shin M."/>
            <person name="Vergez L."/>
            <person name="Schmutz J."/>
            <person name="Larimer F."/>
            <person name="Land M."/>
            <person name="Hauser L."/>
            <person name="Kyrpides N."/>
            <person name="Kim E."/>
            <person name="Taghavi S."/>
            <person name="Vangronsveld D."/>
            <person name="van der Lelie D."/>
            <person name="Richardson P."/>
        </authorList>
    </citation>
    <scope>NUCLEOTIDE SEQUENCE [LARGE SCALE GENOMIC DNA]</scope>
    <source>
        <strain>W619</strain>
    </source>
</reference>
<comment type="similarity">
    <text evidence="1">Belongs to the UPF0145 family.</text>
</comment>
<accession>B1J865</accession>
<dbReference type="EMBL" id="CP000949">
    <property type="protein sequence ID" value="ACA72877.1"/>
    <property type="molecule type" value="Genomic_DNA"/>
</dbReference>
<dbReference type="SMR" id="B1J865"/>
<dbReference type="STRING" id="390235.PputW619_2377"/>
<dbReference type="KEGG" id="ppw:PputW619_2377"/>
<dbReference type="eggNOG" id="COG0393">
    <property type="taxonomic scope" value="Bacteria"/>
</dbReference>
<dbReference type="HOGENOM" id="CLU_117144_3_2_6"/>
<dbReference type="OrthoDB" id="9796448at2"/>
<dbReference type="Gene3D" id="3.30.110.70">
    <property type="entry name" value="Hypothetical protein apc22750. Chain B"/>
    <property type="match status" value="1"/>
</dbReference>
<dbReference type="HAMAP" id="MF_00338">
    <property type="entry name" value="UPF0145"/>
    <property type="match status" value="1"/>
</dbReference>
<dbReference type="InterPro" id="IPR035439">
    <property type="entry name" value="UPF0145_dom_sf"/>
</dbReference>
<dbReference type="InterPro" id="IPR002765">
    <property type="entry name" value="UPF0145_YbjQ-like"/>
</dbReference>
<dbReference type="PANTHER" id="PTHR34068">
    <property type="entry name" value="UPF0145 PROTEIN YBJQ"/>
    <property type="match status" value="1"/>
</dbReference>
<dbReference type="PANTHER" id="PTHR34068:SF1">
    <property type="entry name" value="UPF0145 PROTEIN YBJQ"/>
    <property type="match status" value="1"/>
</dbReference>
<dbReference type="Pfam" id="PF01906">
    <property type="entry name" value="YbjQ_1"/>
    <property type="match status" value="1"/>
</dbReference>
<dbReference type="SUPFAM" id="SSF117782">
    <property type="entry name" value="YbjQ-like"/>
    <property type="match status" value="1"/>
</dbReference>
<evidence type="ECO:0000255" key="1">
    <source>
        <dbReference type="HAMAP-Rule" id="MF_00338"/>
    </source>
</evidence>
<organism>
    <name type="scientific">Pseudomonas putida (strain W619)</name>
    <dbReference type="NCBI Taxonomy" id="390235"/>
    <lineage>
        <taxon>Bacteria</taxon>
        <taxon>Pseudomonadati</taxon>
        <taxon>Pseudomonadota</taxon>
        <taxon>Gammaproteobacteria</taxon>
        <taxon>Pseudomonadales</taxon>
        <taxon>Pseudomonadaceae</taxon>
        <taxon>Pseudomonas</taxon>
    </lineage>
</organism>
<sequence length="106" mass="11585">MIISTTSQLEGRPIAEYLGVVSSESVQGINFVRDFFARFRDFFGGRSQTLEGALRLAREQATEELKARARQLQADAVVGVDFEISMPSVQGGMVVVFATGTAVRLK</sequence>